<evidence type="ECO:0000255" key="1">
    <source>
        <dbReference type="HAMAP-Rule" id="MF_04069"/>
    </source>
</evidence>
<evidence type="ECO:0000256" key="2">
    <source>
        <dbReference type="SAM" id="MobiDB-lite"/>
    </source>
</evidence>
<organismHost>
    <name type="scientific">Aves</name>
    <dbReference type="NCBI Taxonomy" id="8782"/>
</organismHost>
<organismHost>
    <name type="scientific">Felis catus</name>
    <name type="common">Cat</name>
    <name type="synonym">Felis silvestris catus</name>
    <dbReference type="NCBI Taxonomy" id="9685"/>
</organismHost>
<organismHost>
    <name type="scientific">Homo sapiens</name>
    <name type="common">Human</name>
    <dbReference type="NCBI Taxonomy" id="9606"/>
</organismHost>
<organismHost>
    <name type="scientific">Panthera pardus</name>
    <name type="common">Leopard</name>
    <name type="synonym">Felis pardus</name>
    <dbReference type="NCBI Taxonomy" id="9691"/>
</organismHost>
<organismHost>
    <name type="scientific">Panthera tigris</name>
    <name type="common">Tiger</name>
    <dbReference type="NCBI Taxonomy" id="9694"/>
</organismHost>
<organismHost>
    <name type="scientific">Sus scrofa</name>
    <name type="common">Pig</name>
    <dbReference type="NCBI Taxonomy" id="9823"/>
</organismHost>
<name>M2_I00A0</name>
<feature type="chain" id="PRO_0000311621" description="Matrix protein 2">
    <location>
        <begin position="1"/>
        <end position="97"/>
    </location>
</feature>
<feature type="topological domain" description="Virion surface" evidence="1">
    <location>
        <begin position="1"/>
        <end position="22"/>
    </location>
</feature>
<feature type="transmembrane region" description="Helical; Signal-anchor for type III membrane protein" evidence="1">
    <location>
        <begin position="23"/>
        <end position="43"/>
    </location>
</feature>
<feature type="topological domain" description="Intravirion" evidence="1">
    <location>
        <begin position="44"/>
        <end position="97"/>
    </location>
</feature>
<feature type="region of interest" description="Disordered" evidence="2">
    <location>
        <begin position="60"/>
        <end position="83"/>
    </location>
</feature>
<feature type="site" description="Essential for channel activity, possibly by being protonated during channel activation, and by forming the channel gate and the selective filter" evidence="1">
    <location>
        <position position="37"/>
    </location>
</feature>
<feature type="site" description="Seems to be involved in pH gating" evidence="1">
    <location>
        <position position="41"/>
    </location>
</feature>
<feature type="modified residue" description="Phosphoserine; by host" evidence="1">
    <location>
        <position position="64"/>
    </location>
</feature>
<feature type="modified residue" description="Phosphoserine; by host" evidence="1">
    <location>
        <position position="82"/>
    </location>
</feature>
<feature type="lipid moiety-binding region" description="S-palmitoyl cysteine; by host" evidence="1">
    <location>
        <position position="50"/>
    </location>
</feature>
<feature type="disulfide bond" description="Interchain (with C-17)" evidence="1">
    <location>
        <position position="17"/>
    </location>
</feature>
<feature type="disulfide bond" description="Interchain (with C-19)" evidence="1">
    <location>
        <position position="19"/>
    </location>
</feature>
<protein>
    <recommendedName>
        <fullName evidence="1">Matrix protein 2</fullName>
    </recommendedName>
    <alternativeName>
        <fullName evidence="1">Proton channel protein M2</fullName>
    </alternativeName>
</protein>
<proteinExistence type="inferred from homology"/>
<gene>
    <name evidence="1" type="primary">M</name>
</gene>
<reference key="1">
    <citation type="journal article" date="2002" name="Virology">
        <title>H5N1 influenza viruses isolated from geese in Southeastern China: evidence for genetic reassortment and interspecies transmission to ducks.</title>
        <authorList>
            <person name="Guan Y."/>
            <person name="Peiris M."/>
            <person name="Kong K.F."/>
            <person name="Dyrting K.C."/>
            <person name="Ellis T.M."/>
            <person name="Sit T."/>
            <person name="Zhang L.J."/>
            <person name="Shortridge K.F."/>
        </authorList>
    </citation>
    <scope>NUCLEOTIDE SEQUENCE [GENOMIC RNA]</scope>
</reference>
<accession>P0C575</accession>
<keyword id="KW-0025">Alternative splicing</keyword>
<keyword id="KW-1015">Disulfide bond</keyword>
<keyword id="KW-1032">Host cell membrane</keyword>
<keyword id="KW-1043">Host membrane</keyword>
<keyword id="KW-0945">Host-virus interaction</keyword>
<keyword id="KW-0375">Hydrogen ion transport</keyword>
<keyword id="KW-1083">Inhibition of host autophagy by virus</keyword>
<keyword id="KW-0407">Ion channel</keyword>
<keyword id="KW-0406">Ion transport</keyword>
<keyword id="KW-0449">Lipoprotein</keyword>
<keyword id="KW-0472">Membrane</keyword>
<keyword id="KW-0564">Palmitate</keyword>
<keyword id="KW-0597">Phosphoprotein</keyword>
<keyword id="KW-0735">Signal-anchor</keyword>
<keyword id="KW-0812">Transmembrane</keyword>
<keyword id="KW-1133">Transmembrane helix</keyword>
<keyword id="KW-0813">Transport</keyword>
<keyword id="KW-1182">Viral ion channel</keyword>
<keyword id="KW-0946">Virion</keyword>
<sequence>MSLLTEVETPTRNEWECRCSGSSDPLVVAASIIGILHLILWILDRLFFKCIYRRLKYGLKRGPSTEGVPESMREEYRQEQQSAVDVDDGHFVNIELE</sequence>
<comment type="function">
    <text evidence="1">Forms a proton-selective ion channel that is necessary for the efficient release of the viral genome during virus entry. After attaching to the cell surface, the virion enters the cell by endocytosis. Acidification of the endosome triggers M2 ion channel activity. The influx of protons into virion interior is believed to disrupt interactions between the viral ribonucleoprotein (RNP), matrix protein 1 (M1), and lipid bilayers, thereby freeing the viral genome from interaction with viral proteins and enabling RNA segments to migrate to the host cell nucleus, where influenza virus RNA transcription and replication occur. Also plays a role in viral proteins secretory pathway. Elevates the intravesicular pH of normally acidic compartments, such as trans-Golgi network, preventing newly formed hemagglutinin from premature switching to the fusion-active conformation.</text>
</comment>
<comment type="activity regulation">
    <text>The M2 protein from most influenza A strains is inhibited by amantadine and rimantadine, resulting in viral uncoating incapacity. Emergence of amantadine-resistant variants is usually rapid.</text>
</comment>
<comment type="subunit">
    <text evidence="1">Homotetramer; composed of two disulfide-linked dimers held together by non-covalent interactions. May interact with matrix protein 1.</text>
</comment>
<comment type="subcellular location">
    <subcellularLocation>
        <location evidence="1">Virion membrane</location>
    </subcellularLocation>
    <subcellularLocation>
        <location evidence="1">Host apical cell membrane</location>
        <topology evidence="1">Single-pass type III membrane protein</topology>
    </subcellularLocation>
    <text evidence="1">Abundantly expressed at the apical plasma membrane in infected polarized epithelial cells, in close proximity to budding and assembled virions. Minor component of virions (only 16-20 molecules/virion).</text>
</comment>
<comment type="alternative products">
    <event type="alternative splicing"/>
    <isoform>
        <id>P0C575-1</id>
        <name>M2</name>
        <sequence type="displayed"/>
    </isoform>
    <isoform>
        <id>Q8QPI1-1</id>
        <name>M1</name>
        <sequence type="external"/>
    </isoform>
    <text>Only the first 9 residues are shared by the 2 isoforms.</text>
</comment>
<comment type="domain">
    <text evidence="1">Cytoplasmic tail plays an important role in virion assembly and morphogenesis.</text>
</comment>
<comment type="miscellaneous">
    <text evidence="1">When the channel is activated, one or more imidazole moieties of His-37 probably become bi-protonated.</text>
</comment>
<comment type="similarity">
    <text evidence="1">Belongs to the influenza viruses matrix protein M2 family.</text>
</comment>
<organism>
    <name type="scientific">Influenza A virus (strain A/Duck/Hong Kong/2986.1/2000 H5N1 genotype C)</name>
    <dbReference type="NCBI Taxonomy" id="176674"/>
    <lineage>
        <taxon>Viruses</taxon>
        <taxon>Riboviria</taxon>
        <taxon>Orthornavirae</taxon>
        <taxon>Negarnaviricota</taxon>
        <taxon>Polyploviricotina</taxon>
        <taxon>Insthoviricetes</taxon>
        <taxon>Articulavirales</taxon>
        <taxon>Orthomyxoviridae</taxon>
        <taxon>Alphainfluenzavirus</taxon>
        <taxon>Alphainfluenzavirus influenzae</taxon>
        <taxon>Influenza A virus</taxon>
    </lineage>
</organism>
<dbReference type="EMBL" id="AY059511">
    <property type="status" value="NOT_ANNOTATED_CDS"/>
    <property type="molecule type" value="Genomic_RNA"/>
</dbReference>
<dbReference type="SMR" id="P0C575"/>
<dbReference type="Proteomes" id="UP000008285">
    <property type="component" value="Genome"/>
</dbReference>
<dbReference type="GO" id="GO:0020002">
    <property type="term" value="C:host cell plasma membrane"/>
    <property type="evidence" value="ECO:0007669"/>
    <property type="project" value="UniProtKB-SubCell"/>
</dbReference>
<dbReference type="GO" id="GO:0016020">
    <property type="term" value="C:membrane"/>
    <property type="evidence" value="ECO:0007669"/>
    <property type="project" value="UniProtKB-UniRule"/>
</dbReference>
<dbReference type="GO" id="GO:0055036">
    <property type="term" value="C:virion membrane"/>
    <property type="evidence" value="ECO:0007669"/>
    <property type="project" value="UniProtKB-SubCell"/>
</dbReference>
<dbReference type="GO" id="GO:0005216">
    <property type="term" value="F:monoatomic ion channel activity"/>
    <property type="evidence" value="ECO:0007669"/>
    <property type="project" value="UniProtKB-UniRule"/>
</dbReference>
<dbReference type="GO" id="GO:0015078">
    <property type="term" value="F:proton transmembrane transporter activity"/>
    <property type="evidence" value="ECO:0007669"/>
    <property type="project" value="UniProtKB-UniRule"/>
</dbReference>
<dbReference type="GO" id="GO:0051259">
    <property type="term" value="P:protein complex oligomerization"/>
    <property type="evidence" value="ECO:0007669"/>
    <property type="project" value="UniProtKB-UniRule"/>
</dbReference>
<dbReference type="GO" id="GO:0044694">
    <property type="term" value="P:symbiont genome entry into host cell via pore formation in plasma membrane"/>
    <property type="evidence" value="ECO:0007669"/>
    <property type="project" value="UniProtKB-UniRule"/>
</dbReference>
<dbReference type="GO" id="GO:0140321">
    <property type="term" value="P:symbiont-mediated suppression of host autophagy"/>
    <property type="evidence" value="ECO:0007669"/>
    <property type="project" value="UniProtKB-KW"/>
</dbReference>
<dbReference type="Gene3D" id="6.10.250.1640">
    <property type="match status" value="1"/>
</dbReference>
<dbReference type="HAMAP" id="MF_04069">
    <property type="entry name" value="INFV_M2"/>
    <property type="match status" value="1"/>
</dbReference>
<dbReference type="InterPro" id="IPR002089">
    <property type="entry name" value="Flu_M2"/>
</dbReference>
<dbReference type="Pfam" id="PF00599">
    <property type="entry name" value="Flu_M2"/>
    <property type="match status" value="1"/>
</dbReference>